<comment type="function">
    <text evidence="5">MFS transporter; part of the gene cluster that mediates the biosynthesis the mycotoxin citrinin, a hepato-nephrotoxic compound to humans due to inhibition of respiration complex III (Ref.1).</text>
</comment>
<comment type="subcellular location">
    <subcellularLocation>
        <location evidence="1">Membrane</location>
        <topology evidence="1">Multi-pass membrane protein</topology>
    </subcellularLocation>
</comment>
<comment type="similarity">
    <text evidence="1">Belongs to the major facilitator superfamily. CAR1 family.</text>
</comment>
<keyword id="KW-0325">Glycoprotein</keyword>
<keyword id="KW-0472">Membrane</keyword>
<keyword id="KW-0812">Transmembrane</keyword>
<keyword id="KW-1133">Transmembrane helix</keyword>
<reference key="1">
    <citation type="journal article" date="2016" name="Chem. Sci.">
        <title>The molecular steps of citrinin biosynthesis in fungi.</title>
        <authorList>
            <person name="He Y."/>
            <person name="Cox R.J."/>
        </authorList>
    </citation>
    <scope>NUCLEOTIDE SEQUENCE [GENOMIC DNA]</scope>
    <source>
        <strain>M7</strain>
    </source>
</reference>
<feature type="chain" id="PRO_0000440327" description="Citrinin biosynthesis cluster MFS transporter mrr1">
    <location>
        <begin position="1"/>
        <end position="499"/>
    </location>
</feature>
<feature type="transmembrane region" description="Helical" evidence="1">
    <location>
        <begin position="58"/>
        <end position="78"/>
    </location>
</feature>
<feature type="transmembrane region" description="Helical" evidence="1">
    <location>
        <begin position="95"/>
        <end position="115"/>
    </location>
</feature>
<feature type="transmembrane region" description="Helical" evidence="1">
    <location>
        <begin position="124"/>
        <end position="144"/>
    </location>
</feature>
<feature type="transmembrane region" description="Helical" evidence="1">
    <location>
        <begin position="155"/>
        <end position="175"/>
    </location>
</feature>
<feature type="transmembrane region" description="Helical" evidence="1">
    <location>
        <begin position="187"/>
        <end position="207"/>
    </location>
</feature>
<feature type="transmembrane region" description="Helical" evidence="1">
    <location>
        <begin position="215"/>
        <end position="235"/>
    </location>
</feature>
<feature type="transmembrane region" description="Helical" evidence="1">
    <location>
        <begin position="291"/>
        <end position="311"/>
    </location>
</feature>
<feature type="transmembrane region" description="Helical" evidence="1">
    <location>
        <begin position="327"/>
        <end position="347"/>
    </location>
</feature>
<feature type="transmembrane region" description="Helical" evidence="1">
    <location>
        <begin position="370"/>
        <end position="390"/>
    </location>
</feature>
<feature type="transmembrane region" description="Helical" evidence="1">
    <location>
        <begin position="395"/>
        <end position="415"/>
    </location>
</feature>
<feature type="transmembrane region" description="Helical" evidence="1">
    <location>
        <begin position="443"/>
        <end position="463"/>
    </location>
</feature>
<feature type="transmembrane region" description="Helical" evidence="1">
    <location>
        <begin position="467"/>
        <end position="487"/>
    </location>
</feature>
<feature type="region of interest" description="Disordered" evidence="3">
    <location>
        <begin position="1"/>
        <end position="29"/>
    </location>
</feature>
<feature type="glycosylation site" description="N-linked (GlcNAc...) asparagine" evidence="2">
    <location>
        <position position="361"/>
    </location>
</feature>
<evidence type="ECO:0000255" key="1"/>
<evidence type="ECO:0000255" key="2">
    <source>
        <dbReference type="PROSITE-ProRule" id="PRU00498"/>
    </source>
</evidence>
<evidence type="ECO:0000256" key="3">
    <source>
        <dbReference type="SAM" id="MobiDB-lite"/>
    </source>
</evidence>
<evidence type="ECO:0000303" key="4">
    <source ref="1"/>
</evidence>
<evidence type="ECO:0000305" key="5">
    <source ref="1"/>
</evidence>
<name>MRR1_MONRU</name>
<accession>A0A161CLJ6</accession>
<proteinExistence type="inferred from homology"/>
<sequence length="499" mass="55181">MKEEIDAPVSTDASGTDLENARDQPSGEKPTAVDIYLVEWDGPNDPELPMNFPLWKKSLITCIFSTLTIWVTFSSSVFSAAAGITSKEFHVSVEVMTLGTSLTVLGFTVGPLVWGPMSELYGRLKPLYIGYAIFIIFQVPVAVAQNLETLMLARFFLGFFGTSALAIIPGALADFWGPVERAIAISLFSAATFVGPIFGPIIGGFIVDSSLGWRWTAWITMIPASFFGIIAFLTLPETYHPVLLQRRASRLRKETRIWAYHSRLDENTPTFGEILTKYLFRPIQMLFLEPILVCMTIYISLIYGILYLFFVAYPIAFREVRNWKSLGIAALPFLGILVGVLMGCLLVTIATRLWYAPKLQNGSVVPEDRLPPMIVAAILLPIGLFWFGWTSSPSISWAPQAIAGAPIGMGILMIWMQGLNYLIDVYLVVANSAMSANTLIRSAVGAAFPLFATAMYHKLGVDWATSLLGFLSIAMIPIPVIFYFYGAKIRALSRFSPKW</sequence>
<organism>
    <name type="scientific">Monascus ruber</name>
    <name type="common">Mold</name>
    <dbReference type="NCBI Taxonomy" id="89489"/>
    <lineage>
        <taxon>Eukaryota</taxon>
        <taxon>Fungi</taxon>
        <taxon>Dikarya</taxon>
        <taxon>Ascomycota</taxon>
        <taxon>Pezizomycotina</taxon>
        <taxon>Eurotiomycetes</taxon>
        <taxon>Eurotiomycetidae</taxon>
        <taxon>Eurotiales</taxon>
        <taxon>Aspergillaceae</taxon>
        <taxon>Monascus</taxon>
    </lineage>
</organism>
<protein>
    <recommendedName>
        <fullName evidence="4">Citrinin biosynthesis cluster MFS transporter mrr1</fullName>
    </recommendedName>
</protein>
<dbReference type="EMBL" id="KT781075">
    <property type="protein sequence ID" value="ALI92656.1"/>
    <property type="molecule type" value="Genomic_DNA"/>
</dbReference>
<dbReference type="GlyCosmos" id="A0A161CLJ6">
    <property type="glycosylation" value="1 site, No reported glycans"/>
</dbReference>
<dbReference type="GO" id="GO:0005886">
    <property type="term" value="C:plasma membrane"/>
    <property type="evidence" value="ECO:0007669"/>
    <property type="project" value="TreeGrafter"/>
</dbReference>
<dbReference type="GO" id="GO:0022857">
    <property type="term" value="F:transmembrane transporter activity"/>
    <property type="evidence" value="ECO:0007669"/>
    <property type="project" value="InterPro"/>
</dbReference>
<dbReference type="CDD" id="cd17323">
    <property type="entry name" value="MFS_Tpo1_MDR_like"/>
    <property type="match status" value="1"/>
</dbReference>
<dbReference type="FunFam" id="1.20.1250.20:FF:000011">
    <property type="entry name" value="MFS multidrug transporter, putative"/>
    <property type="match status" value="1"/>
</dbReference>
<dbReference type="Gene3D" id="1.20.1250.20">
    <property type="entry name" value="MFS general substrate transporter like domains"/>
    <property type="match status" value="1"/>
</dbReference>
<dbReference type="InterPro" id="IPR011701">
    <property type="entry name" value="MFS"/>
</dbReference>
<dbReference type="InterPro" id="IPR020846">
    <property type="entry name" value="MFS_dom"/>
</dbReference>
<dbReference type="InterPro" id="IPR036259">
    <property type="entry name" value="MFS_trans_sf"/>
</dbReference>
<dbReference type="PANTHER" id="PTHR23502">
    <property type="entry name" value="MAJOR FACILITATOR SUPERFAMILY"/>
    <property type="match status" value="1"/>
</dbReference>
<dbReference type="PANTHER" id="PTHR23502:SF47">
    <property type="entry name" value="MAJOR FACILITATOR SUPERFAMILY (MFS) PROFILE DOMAIN-CONTAINING PROTEIN-RELATED"/>
    <property type="match status" value="1"/>
</dbReference>
<dbReference type="Pfam" id="PF07690">
    <property type="entry name" value="MFS_1"/>
    <property type="match status" value="1"/>
</dbReference>
<dbReference type="SUPFAM" id="SSF103473">
    <property type="entry name" value="MFS general substrate transporter"/>
    <property type="match status" value="1"/>
</dbReference>
<dbReference type="PROSITE" id="PS50850">
    <property type="entry name" value="MFS"/>
    <property type="match status" value="1"/>
</dbReference>
<gene>
    <name evidence="4" type="primary">mrr1</name>
</gene>